<proteinExistence type="inferred from homology"/>
<evidence type="ECO:0000255" key="1">
    <source>
        <dbReference type="HAMAP-Rule" id="MF_01062"/>
    </source>
</evidence>
<reference key="1">
    <citation type="journal article" date="2008" name="J. Bacteriol.">
        <title>Comparative genome sequence analysis of multidrug-resistant Acinetobacter baumannii.</title>
        <authorList>
            <person name="Adams M.D."/>
            <person name="Goglin K."/>
            <person name="Molyneaux N."/>
            <person name="Hujer K.M."/>
            <person name="Lavender H."/>
            <person name="Jamison J.J."/>
            <person name="MacDonald I.J."/>
            <person name="Martin K.M."/>
            <person name="Russo T."/>
            <person name="Campagnari A.A."/>
            <person name="Hujer A.M."/>
            <person name="Bonomo R.A."/>
            <person name="Gill S.R."/>
        </authorList>
    </citation>
    <scope>NUCLEOTIDE SEQUENCE [LARGE SCALE GENOMIC DNA]</scope>
    <source>
        <strain>AB307-0294</strain>
    </source>
</reference>
<sequence>MSESKQFKRSVFFISDGTAITAETLGHSLLAQFPNVDFDIHIMPYITTEEAAMAVVVEINKCQTRDGCLPLVFDTLVDPHVREIINTAKAVNLDVFEGLISKLEQELGTPPTTLVGQTHAVTDSEYYKARIDAVHFALDNDDGARTRHYDKADLILIGVSRSGKTPTSIYLSLQFGIRVANYPLTEEDLDDNRLPAVLREHRSKLFGLMIDAERLVAIRSERKANSRYASFSQCQMELRAIEGIYISEGIKYLNVTEMSIEEISTRILQMTGLKRRIG</sequence>
<gene>
    <name type="ordered locus">ABBFA_001301</name>
</gene>
<name>PSRP_ACIB3</name>
<keyword id="KW-0418">Kinase</keyword>
<keyword id="KW-0547">Nucleotide-binding</keyword>
<keyword id="KW-0723">Serine/threonine-protein kinase</keyword>
<keyword id="KW-0808">Transferase</keyword>
<accession>B7H0K8</accession>
<organism>
    <name type="scientific">Acinetobacter baumannii (strain AB307-0294)</name>
    <dbReference type="NCBI Taxonomy" id="557600"/>
    <lineage>
        <taxon>Bacteria</taxon>
        <taxon>Pseudomonadati</taxon>
        <taxon>Pseudomonadota</taxon>
        <taxon>Gammaproteobacteria</taxon>
        <taxon>Moraxellales</taxon>
        <taxon>Moraxellaceae</taxon>
        <taxon>Acinetobacter</taxon>
        <taxon>Acinetobacter calcoaceticus/baumannii complex</taxon>
    </lineage>
</organism>
<protein>
    <recommendedName>
        <fullName evidence="1">Putative phosphoenolpyruvate synthase regulatory protein</fullName>
        <shortName evidence="1">PEP synthase regulatory protein</shortName>
        <shortName evidence="1">PSRP</shortName>
        <ecNumber evidence="1">2.7.11.33</ecNumber>
        <ecNumber evidence="1">2.7.4.28</ecNumber>
    </recommendedName>
    <alternativeName>
        <fullName evidence="1">Pyruvate, water dikinase regulatory protein</fullName>
    </alternativeName>
</protein>
<comment type="function">
    <text evidence="1">Bifunctional serine/threonine kinase and phosphorylase involved in the regulation of the phosphoenolpyruvate synthase (PEPS) by catalyzing its phosphorylation/dephosphorylation.</text>
</comment>
<comment type="catalytic activity">
    <reaction evidence="1">
        <text>[pyruvate, water dikinase] + ADP = [pyruvate, water dikinase]-phosphate + AMP + H(+)</text>
        <dbReference type="Rhea" id="RHEA:46020"/>
        <dbReference type="Rhea" id="RHEA-COMP:11425"/>
        <dbReference type="Rhea" id="RHEA-COMP:11426"/>
        <dbReference type="ChEBI" id="CHEBI:15378"/>
        <dbReference type="ChEBI" id="CHEBI:43176"/>
        <dbReference type="ChEBI" id="CHEBI:68546"/>
        <dbReference type="ChEBI" id="CHEBI:456215"/>
        <dbReference type="ChEBI" id="CHEBI:456216"/>
        <dbReference type="EC" id="2.7.11.33"/>
    </reaction>
</comment>
<comment type="catalytic activity">
    <reaction evidence="1">
        <text>[pyruvate, water dikinase]-phosphate + phosphate + H(+) = [pyruvate, water dikinase] + diphosphate</text>
        <dbReference type="Rhea" id="RHEA:48580"/>
        <dbReference type="Rhea" id="RHEA-COMP:11425"/>
        <dbReference type="Rhea" id="RHEA-COMP:11426"/>
        <dbReference type="ChEBI" id="CHEBI:15378"/>
        <dbReference type="ChEBI" id="CHEBI:33019"/>
        <dbReference type="ChEBI" id="CHEBI:43176"/>
        <dbReference type="ChEBI" id="CHEBI:43474"/>
        <dbReference type="ChEBI" id="CHEBI:68546"/>
        <dbReference type="EC" id="2.7.4.28"/>
    </reaction>
</comment>
<comment type="similarity">
    <text evidence="1">Belongs to the pyruvate, phosphate/water dikinase regulatory protein family. PSRP subfamily.</text>
</comment>
<dbReference type="EC" id="2.7.11.33" evidence="1"/>
<dbReference type="EC" id="2.7.4.28" evidence="1"/>
<dbReference type="EMBL" id="CP001172">
    <property type="protein sequence ID" value="ACJ58938.1"/>
    <property type="molecule type" value="Genomic_DNA"/>
</dbReference>
<dbReference type="RefSeq" id="WP_000004354.1">
    <property type="nucleotide sequence ID" value="NZ_CP001172.1"/>
</dbReference>
<dbReference type="SMR" id="B7H0K8"/>
<dbReference type="HOGENOM" id="CLU_046206_1_0_6"/>
<dbReference type="Proteomes" id="UP000006924">
    <property type="component" value="Chromosome"/>
</dbReference>
<dbReference type="GO" id="GO:0043531">
    <property type="term" value="F:ADP binding"/>
    <property type="evidence" value="ECO:0007669"/>
    <property type="project" value="UniProtKB-UniRule"/>
</dbReference>
<dbReference type="GO" id="GO:0005524">
    <property type="term" value="F:ATP binding"/>
    <property type="evidence" value="ECO:0007669"/>
    <property type="project" value="InterPro"/>
</dbReference>
<dbReference type="GO" id="GO:0016776">
    <property type="term" value="F:phosphotransferase activity, phosphate group as acceptor"/>
    <property type="evidence" value="ECO:0007669"/>
    <property type="project" value="UniProtKB-UniRule"/>
</dbReference>
<dbReference type="GO" id="GO:0004674">
    <property type="term" value="F:protein serine/threonine kinase activity"/>
    <property type="evidence" value="ECO:0007669"/>
    <property type="project" value="UniProtKB-UniRule"/>
</dbReference>
<dbReference type="HAMAP" id="MF_01062">
    <property type="entry name" value="PSRP"/>
    <property type="match status" value="1"/>
</dbReference>
<dbReference type="InterPro" id="IPR005177">
    <property type="entry name" value="Kinase-pyrophosphorylase"/>
</dbReference>
<dbReference type="InterPro" id="IPR026530">
    <property type="entry name" value="PSRP"/>
</dbReference>
<dbReference type="NCBIfam" id="NF003742">
    <property type="entry name" value="PRK05339.1"/>
    <property type="match status" value="1"/>
</dbReference>
<dbReference type="PANTHER" id="PTHR31756">
    <property type="entry name" value="PYRUVATE, PHOSPHATE DIKINASE REGULATORY PROTEIN 1, CHLOROPLASTIC"/>
    <property type="match status" value="1"/>
</dbReference>
<dbReference type="PANTHER" id="PTHR31756:SF3">
    <property type="entry name" value="PYRUVATE, PHOSPHATE DIKINASE REGULATORY PROTEIN 1, CHLOROPLASTIC"/>
    <property type="match status" value="1"/>
</dbReference>
<dbReference type="Pfam" id="PF03618">
    <property type="entry name" value="Kinase-PPPase"/>
    <property type="match status" value="1"/>
</dbReference>
<feature type="chain" id="PRO_1000136446" description="Putative phosphoenolpyruvate synthase regulatory protein">
    <location>
        <begin position="1"/>
        <end position="278"/>
    </location>
</feature>
<feature type="binding site" evidence="1">
    <location>
        <begin position="158"/>
        <end position="165"/>
    </location>
    <ligand>
        <name>ADP</name>
        <dbReference type="ChEBI" id="CHEBI:456216"/>
    </ligand>
</feature>